<sequence length="444" mass="46921">MTQITPTCAPPPGPTITDRTSLRLSKAIAGKSRGWKTGLLFAGPAVIASIAYVDPGNFATNIQAGSRYGYTLLWVVAAANLIAMLFQALSAKLGIATGRNLPELCRDHFSRPLVIALWIISEIAAMATDLAEFLGGAIGLALLFRLPLIIGMVATAMITFALLLFEKRGYRVMELVIGALVATIGLCYLAEMFIAPVDWTAAAWATITPRLPDATALTIATGIVGATVMPHAVYLHSGLAQNRAAAATDDASRHRLIRFSNREVILALALAGMVNMAMVIMAASAFHIGHSDVAEIEQAYHTLTPLLGAAAAAIFLISLITSGISSSVVGTMAGQMIMQGFVHIRIPVWLRRLVTMVPAFIVILAGVNATDALVISQVILSIALPAPMIALIYFSGHRELMGPFVNHRVTQWVASAAAAIVLGLNMVLLIQAFGFTIPGLPVAP</sequence>
<name>MNTH_GRABC</name>
<keyword id="KW-0997">Cell inner membrane</keyword>
<keyword id="KW-1003">Cell membrane</keyword>
<keyword id="KW-0406">Ion transport</keyword>
<keyword id="KW-0472">Membrane</keyword>
<keyword id="KW-1185">Reference proteome</keyword>
<keyword id="KW-0769">Symport</keyword>
<keyword id="KW-0812">Transmembrane</keyword>
<keyword id="KW-1133">Transmembrane helix</keyword>
<keyword id="KW-0813">Transport</keyword>
<feature type="chain" id="PRO_0000325604" description="Divalent metal cation transporter MntH">
    <location>
        <begin position="1"/>
        <end position="444"/>
    </location>
</feature>
<feature type="transmembrane region" description="Helical" evidence="1">
    <location>
        <begin position="39"/>
        <end position="59"/>
    </location>
</feature>
<feature type="transmembrane region" description="Helical" evidence="1">
    <location>
        <begin position="69"/>
        <end position="89"/>
    </location>
</feature>
<feature type="transmembrane region" description="Helical" evidence="1">
    <location>
        <begin position="109"/>
        <end position="128"/>
    </location>
</feature>
<feature type="transmembrane region" description="Helical" evidence="1">
    <location>
        <begin position="146"/>
        <end position="166"/>
    </location>
</feature>
<feature type="transmembrane region" description="Helical" evidence="1">
    <location>
        <begin position="175"/>
        <end position="195"/>
    </location>
</feature>
<feature type="transmembrane region" description="Helical" evidence="1">
    <location>
        <begin position="215"/>
        <end position="235"/>
    </location>
</feature>
<feature type="transmembrane region" description="Helical" evidence="1">
    <location>
        <begin position="264"/>
        <end position="284"/>
    </location>
</feature>
<feature type="transmembrane region" description="Helical" evidence="1">
    <location>
        <begin position="304"/>
        <end position="324"/>
    </location>
</feature>
<feature type="transmembrane region" description="Helical" evidence="1">
    <location>
        <begin position="346"/>
        <end position="366"/>
    </location>
</feature>
<feature type="transmembrane region" description="Helical" evidence="1">
    <location>
        <begin position="372"/>
        <end position="392"/>
    </location>
</feature>
<feature type="transmembrane region" description="Helical" evidence="1">
    <location>
        <begin position="417"/>
        <end position="437"/>
    </location>
</feature>
<dbReference type="EMBL" id="CP000394">
    <property type="protein sequence ID" value="ABI60917.1"/>
    <property type="molecule type" value="Genomic_DNA"/>
</dbReference>
<dbReference type="RefSeq" id="WP_011630727.1">
    <property type="nucleotide sequence ID" value="NC_008343.2"/>
</dbReference>
<dbReference type="SMR" id="Q0BW85"/>
<dbReference type="STRING" id="391165.GbCGDNIH1_0019"/>
<dbReference type="KEGG" id="gbe:GbCGDNIH1_0019"/>
<dbReference type="eggNOG" id="COG1914">
    <property type="taxonomic scope" value="Bacteria"/>
</dbReference>
<dbReference type="HOGENOM" id="CLU_020088_2_0_5"/>
<dbReference type="OrthoDB" id="9787548at2"/>
<dbReference type="Proteomes" id="UP000001963">
    <property type="component" value="Chromosome"/>
</dbReference>
<dbReference type="GO" id="GO:0005886">
    <property type="term" value="C:plasma membrane"/>
    <property type="evidence" value="ECO:0007669"/>
    <property type="project" value="UniProtKB-SubCell"/>
</dbReference>
<dbReference type="GO" id="GO:0015086">
    <property type="term" value="F:cadmium ion transmembrane transporter activity"/>
    <property type="evidence" value="ECO:0007669"/>
    <property type="project" value="TreeGrafter"/>
</dbReference>
<dbReference type="GO" id="GO:0005384">
    <property type="term" value="F:manganese ion transmembrane transporter activity"/>
    <property type="evidence" value="ECO:0007669"/>
    <property type="project" value="TreeGrafter"/>
</dbReference>
<dbReference type="GO" id="GO:0046872">
    <property type="term" value="F:metal ion binding"/>
    <property type="evidence" value="ECO:0007669"/>
    <property type="project" value="UniProtKB-UniRule"/>
</dbReference>
<dbReference type="GO" id="GO:0015293">
    <property type="term" value="F:symporter activity"/>
    <property type="evidence" value="ECO:0007669"/>
    <property type="project" value="UniProtKB-UniRule"/>
</dbReference>
<dbReference type="GO" id="GO:0034755">
    <property type="term" value="P:iron ion transmembrane transport"/>
    <property type="evidence" value="ECO:0007669"/>
    <property type="project" value="TreeGrafter"/>
</dbReference>
<dbReference type="HAMAP" id="MF_00221">
    <property type="entry name" value="NRAMP"/>
    <property type="match status" value="1"/>
</dbReference>
<dbReference type="InterPro" id="IPR001046">
    <property type="entry name" value="NRAMP_fam"/>
</dbReference>
<dbReference type="NCBIfam" id="TIGR01197">
    <property type="entry name" value="nramp"/>
    <property type="match status" value="1"/>
</dbReference>
<dbReference type="NCBIfam" id="NF037982">
    <property type="entry name" value="Nramp_1"/>
    <property type="match status" value="1"/>
</dbReference>
<dbReference type="NCBIfam" id="NF001923">
    <property type="entry name" value="PRK00701.1"/>
    <property type="match status" value="1"/>
</dbReference>
<dbReference type="PANTHER" id="PTHR11706:SF33">
    <property type="entry name" value="NATURAL RESISTANCE-ASSOCIATED MACROPHAGE PROTEIN 2"/>
    <property type="match status" value="1"/>
</dbReference>
<dbReference type="PANTHER" id="PTHR11706">
    <property type="entry name" value="SOLUTE CARRIER PROTEIN FAMILY 11 MEMBER"/>
    <property type="match status" value="1"/>
</dbReference>
<dbReference type="Pfam" id="PF01566">
    <property type="entry name" value="Nramp"/>
    <property type="match status" value="1"/>
</dbReference>
<dbReference type="PRINTS" id="PR00447">
    <property type="entry name" value="NATRESASSCMP"/>
</dbReference>
<gene>
    <name evidence="1" type="primary">mntH</name>
    <name type="ordered locus">GbCGDNIH1_0019</name>
</gene>
<evidence type="ECO:0000255" key="1">
    <source>
        <dbReference type="HAMAP-Rule" id="MF_00221"/>
    </source>
</evidence>
<comment type="function">
    <text evidence="1">H(+)-stimulated, divalent metal cation uptake system.</text>
</comment>
<comment type="subcellular location">
    <subcellularLocation>
        <location evidence="1">Cell inner membrane</location>
        <topology evidence="1">Multi-pass membrane protein</topology>
    </subcellularLocation>
</comment>
<comment type="similarity">
    <text evidence="1">Belongs to the NRAMP family.</text>
</comment>
<organism>
    <name type="scientific">Granulibacter bethesdensis (strain ATCC BAA-1260 / CGDNIH1)</name>
    <dbReference type="NCBI Taxonomy" id="391165"/>
    <lineage>
        <taxon>Bacteria</taxon>
        <taxon>Pseudomonadati</taxon>
        <taxon>Pseudomonadota</taxon>
        <taxon>Alphaproteobacteria</taxon>
        <taxon>Acetobacterales</taxon>
        <taxon>Acetobacteraceae</taxon>
        <taxon>Granulibacter</taxon>
    </lineage>
</organism>
<proteinExistence type="inferred from homology"/>
<protein>
    <recommendedName>
        <fullName evidence="1">Divalent metal cation transporter MntH</fullName>
    </recommendedName>
</protein>
<accession>Q0BW85</accession>
<reference key="1">
    <citation type="journal article" date="2007" name="J. Bacteriol.">
        <title>Genome sequence analysis of the emerging human pathogenic acetic acid bacterium Granulibacter bethesdensis.</title>
        <authorList>
            <person name="Greenberg D.E."/>
            <person name="Porcella S.F."/>
            <person name="Zelazny A.M."/>
            <person name="Virtaneva K."/>
            <person name="Sturdevant D.E."/>
            <person name="Kupko J.J. III"/>
            <person name="Barbian K.D."/>
            <person name="Babar A."/>
            <person name="Dorward D.W."/>
            <person name="Holland S.M."/>
        </authorList>
    </citation>
    <scope>NUCLEOTIDE SEQUENCE [LARGE SCALE GENOMIC DNA]</scope>
    <source>
        <strain>ATCC BAA-1260 / CGDNIH1</strain>
    </source>
</reference>